<feature type="chain" id="PRO_1000141616" description="Large ribosomal subunit protein uL2">
    <location>
        <begin position="1"/>
        <end position="273"/>
    </location>
</feature>
<feature type="region of interest" description="Disordered" evidence="2">
    <location>
        <begin position="28"/>
        <end position="53"/>
    </location>
</feature>
<feature type="region of interest" description="Disordered" evidence="2">
    <location>
        <begin position="221"/>
        <end position="273"/>
    </location>
</feature>
<feature type="compositionally biased region" description="Low complexity" evidence="2">
    <location>
        <begin position="39"/>
        <end position="48"/>
    </location>
</feature>
<feature type="modified residue" description="N6-acetyllysine" evidence="1">
    <location>
        <position position="242"/>
    </location>
</feature>
<dbReference type="EMBL" id="CP001063">
    <property type="protein sequence ID" value="ACD10398.1"/>
    <property type="molecule type" value="Genomic_DNA"/>
</dbReference>
<dbReference type="RefSeq" id="WP_000301864.1">
    <property type="nucleotide sequence ID" value="NC_010658.1"/>
</dbReference>
<dbReference type="SMR" id="B2U2T5"/>
<dbReference type="STRING" id="344609.SbBS512_E3702"/>
<dbReference type="GeneID" id="93778670"/>
<dbReference type="KEGG" id="sbc:SbBS512_E3702"/>
<dbReference type="HOGENOM" id="CLU_036235_2_1_6"/>
<dbReference type="Proteomes" id="UP000001030">
    <property type="component" value="Chromosome"/>
</dbReference>
<dbReference type="GO" id="GO:0005829">
    <property type="term" value="C:cytosol"/>
    <property type="evidence" value="ECO:0007669"/>
    <property type="project" value="UniProtKB-ARBA"/>
</dbReference>
<dbReference type="GO" id="GO:0015934">
    <property type="term" value="C:large ribosomal subunit"/>
    <property type="evidence" value="ECO:0007669"/>
    <property type="project" value="InterPro"/>
</dbReference>
<dbReference type="GO" id="GO:0019843">
    <property type="term" value="F:rRNA binding"/>
    <property type="evidence" value="ECO:0007669"/>
    <property type="project" value="UniProtKB-UniRule"/>
</dbReference>
<dbReference type="GO" id="GO:0003735">
    <property type="term" value="F:structural constituent of ribosome"/>
    <property type="evidence" value="ECO:0007669"/>
    <property type="project" value="InterPro"/>
</dbReference>
<dbReference type="GO" id="GO:0016740">
    <property type="term" value="F:transferase activity"/>
    <property type="evidence" value="ECO:0007669"/>
    <property type="project" value="InterPro"/>
</dbReference>
<dbReference type="GO" id="GO:0002181">
    <property type="term" value="P:cytoplasmic translation"/>
    <property type="evidence" value="ECO:0007669"/>
    <property type="project" value="TreeGrafter"/>
</dbReference>
<dbReference type="FunFam" id="2.30.30.30:FF:000001">
    <property type="entry name" value="50S ribosomal protein L2"/>
    <property type="match status" value="1"/>
</dbReference>
<dbReference type="FunFam" id="2.40.50.140:FF:000003">
    <property type="entry name" value="50S ribosomal protein L2"/>
    <property type="match status" value="1"/>
</dbReference>
<dbReference type="FunFam" id="4.10.950.10:FF:000001">
    <property type="entry name" value="50S ribosomal protein L2"/>
    <property type="match status" value="1"/>
</dbReference>
<dbReference type="Gene3D" id="2.30.30.30">
    <property type="match status" value="1"/>
</dbReference>
<dbReference type="Gene3D" id="2.40.50.140">
    <property type="entry name" value="Nucleic acid-binding proteins"/>
    <property type="match status" value="1"/>
</dbReference>
<dbReference type="Gene3D" id="4.10.950.10">
    <property type="entry name" value="Ribosomal protein L2, domain 3"/>
    <property type="match status" value="1"/>
</dbReference>
<dbReference type="HAMAP" id="MF_01320_B">
    <property type="entry name" value="Ribosomal_uL2_B"/>
    <property type="match status" value="1"/>
</dbReference>
<dbReference type="InterPro" id="IPR012340">
    <property type="entry name" value="NA-bd_OB-fold"/>
</dbReference>
<dbReference type="InterPro" id="IPR014722">
    <property type="entry name" value="Rib_uL2_dom2"/>
</dbReference>
<dbReference type="InterPro" id="IPR002171">
    <property type="entry name" value="Ribosomal_uL2"/>
</dbReference>
<dbReference type="InterPro" id="IPR005880">
    <property type="entry name" value="Ribosomal_uL2_bac/org-type"/>
</dbReference>
<dbReference type="InterPro" id="IPR022669">
    <property type="entry name" value="Ribosomal_uL2_C"/>
</dbReference>
<dbReference type="InterPro" id="IPR022671">
    <property type="entry name" value="Ribosomal_uL2_CS"/>
</dbReference>
<dbReference type="InterPro" id="IPR014726">
    <property type="entry name" value="Ribosomal_uL2_dom3"/>
</dbReference>
<dbReference type="InterPro" id="IPR022666">
    <property type="entry name" value="Ribosomal_uL2_RNA-bd_dom"/>
</dbReference>
<dbReference type="InterPro" id="IPR008991">
    <property type="entry name" value="Translation_prot_SH3-like_sf"/>
</dbReference>
<dbReference type="NCBIfam" id="TIGR01171">
    <property type="entry name" value="rplB_bact"/>
    <property type="match status" value="1"/>
</dbReference>
<dbReference type="PANTHER" id="PTHR13691:SF5">
    <property type="entry name" value="LARGE RIBOSOMAL SUBUNIT PROTEIN UL2M"/>
    <property type="match status" value="1"/>
</dbReference>
<dbReference type="PANTHER" id="PTHR13691">
    <property type="entry name" value="RIBOSOMAL PROTEIN L2"/>
    <property type="match status" value="1"/>
</dbReference>
<dbReference type="Pfam" id="PF00181">
    <property type="entry name" value="Ribosomal_L2"/>
    <property type="match status" value="1"/>
</dbReference>
<dbReference type="Pfam" id="PF03947">
    <property type="entry name" value="Ribosomal_L2_C"/>
    <property type="match status" value="1"/>
</dbReference>
<dbReference type="PIRSF" id="PIRSF002158">
    <property type="entry name" value="Ribosomal_L2"/>
    <property type="match status" value="1"/>
</dbReference>
<dbReference type="SMART" id="SM01383">
    <property type="entry name" value="Ribosomal_L2"/>
    <property type="match status" value="1"/>
</dbReference>
<dbReference type="SMART" id="SM01382">
    <property type="entry name" value="Ribosomal_L2_C"/>
    <property type="match status" value="1"/>
</dbReference>
<dbReference type="SUPFAM" id="SSF50249">
    <property type="entry name" value="Nucleic acid-binding proteins"/>
    <property type="match status" value="1"/>
</dbReference>
<dbReference type="SUPFAM" id="SSF50104">
    <property type="entry name" value="Translation proteins SH3-like domain"/>
    <property type="match status" value="1"/>
</dbReference>
<dbReference type="PROSITE" id="PS00467">
    <property type="entry name" value="RIBOSOMAL_L2"/>
    <property type="match status" value="1"/>
</dbReference>
<name>RL2_SHIB3</name>
<protein>
    <recommendedName>
        <fullName evidence="1">Large ribosomal subunit protein uL2</fullName>
    </recommendedName>
    <alternativeName>
        <fullName evidence="3">50S ribosomal protein L2</fullName>
    </alternativeName>
</protein>
<proteinExistence type="inferred from homology"/>
<evidence type="ECO:0000255" key="1">
    <source>
        <dbReference type="HAMAP-Rule" id="MF_01320"/>
    </source>
</evidence>
<evidence type="ECO:0000256" key="2">
    <source>
        <dbReference type="SAM" id="MobiDB-lite"/>
    </source>
</evidence>
<evidence type="ECO:0000305" key="3"/>
<keyword id="KW-0007">Acetylation</keyword>
<keyword id="KW-1185">Reference proteome</keyword>
<keyword id="KW-0687">Ribonucleoprotein</keyword>
<keyword id="KW-0689">Ribosomal protein</keyword>
<keyword id="KW-0694">RNA-binding</keyword>
<keyword id="KW-0699">rRNA-binding</keyword>
<comment type="function">
    <text evidence="1">One of the primary rRNA binding proteins. Required for association of the 30S and 50S subunits to form the 70S ribosome, for tRNA binding and peptide bond formation. It has been suggested to have peptidyltransferase activity; this is somewhat controversial. Makes several contacts with the 16S rRNA in the 70S ribosome.</text>
</comment>
<comment type="subunit">
    <text evidence="1">Part of the 50S ribosomal subunit. Forms a bridge to the 30S subunit in the 70S ribosome.</text>
</comment>
<comment type="similarity">
    <text evidence="1">Belongs to the universal ribosomal protein uL2 family.</text>
</comment>
<sequence length="273" mass="29860">MAVVKCKPTSPGRRHVVKVVNPELHKGKPFAPLLEKNSKSGGRNNNGRITTRHIGGGHKQAYRIVDFKRNKDGIPAVVERLEYDPNRSANIALVLYKDGERRYILAPKGLKAGDQIQSGVDAAIKPGNTLPMRNIPVGSTVHNVEMKPGKGGQLARSAGTYVQIVARDGAYVTLRLRSGEMRKVEADCRATLGEVGNAEHMLRVLGKAGAARWRGVRPTVRGTAMNPVDHPHGGGEGRNFGKHPVTPWGVQTKGKKTRSNKRTDKFIVRRRSK</sequence>
<accession>B2U2T5</accession>
<organism>
    <name type="scientific">Shigella boydii serotype 18 (strain CDC 3083-94 / BS512)</name>
    <dbReference type="NCBI Taxonomy" id="344609"/>
    <lineage>
        <taxon>Bacteria</taxon>
        <taxon>Pseudomonadati</taxon>
        <taxon>Pseudomonadota</taxon>
        <taxon>Gammaproteobacteria</taxon>
        <taxon>Enterobacterales</taxon>
        <taxon>Enterobacteriaceae</taxon>
        <taxon>Shigella</taxon>
    </lineage>
</organism>
<reference key="1">
    <citation type="submission" date="2008-05" db="EMBL/GenBank/DDBJ databases">
        <title>Complete sequence of Shigella boydii serotype 18 strain BS512.</title>
        <authorList>
            <person name="Rasko D.A."/>
            <person name="Rosovitz M."/>
            <person name="Maurelli A.T."/>
            <person name="Myers G."/>
            <person name="Seshadri R."/>
            <person name="Cer R."/>
            <person name="Jiang L."/>
            <person name="Ravel J."/>
            <person name="Sebastian Y."/>
        </authorList>
    </citation>
    <scope>NUCLEOTIDE SEQUENCE [LARGE SCALE GENOMIC DNA]</scope>
    <source>
        <strain>CDC 3083-94 / BS512</strain>
    </source>
</reference>
<gene>
    <name evidence="1" type="primary">rplB</name>
    <name type="ordered locus">SbBS512_E3702</name>
</gene>